<keyword id="KW-0963">Cytoplasm</keyword>
<keyword id="KW-0251">Elongation factor</keyword>
<keyword id="KW-0648">Protein biosynthesis</keyword>
<name>EFTS_NAUPA</name>
<reference key="1">
    <citation type="journal article" date="2009" name="PLoS Genet.">
        <title>Adaptations to submarine hydrothermal environments exemplified by the genome of Nautilia profundicola.</title>
        <authorList>
            <person name="Campbell B.J."/>
            <person name="Smith J.L."/>
            <person name="Hanson T.E."/>
            <person name="Klotz M.G."/>
            <person name="Stein L.Y."/>
            <person name="Lee C.K."/>
            <person name="Wu D."/>
            <person name="Robinson J.M."/>
            <person name="Khouri H.M."/>
            <person name="Eisen J.A."/>
            <person name="Cary S.C."/>
        </authorList>
    </citation>
    <scope>NUCLEOTIDE SEQUENCE [LARGE SCALE GENOMIC DNA]</scope>
    <source>
        <strain>ATCC BAA-1463 / DSM 18972 / AmH</strain>
    </source>
</reference>
<organism>
    <name type="scientific">Nautilia profundicola (strain ATCC BAA-1463 / DSM 18972 / AmH)</name>
    <dbReference type="NCBI Taxonomy" id="598659"/>
    <lineage>
        <taxon>Bacteria</taxon>
        <taxon>Pseudomonadati</taxon>
        <taxon>Campylobacterota</taxon>
        <taxon>Epsilonproteobacteria</taxon>
        <taxon>Nautiliales</taxon>
        <taxon>Nautiliaceae</taxon>
        <taxon>Nautilia</taxon>
    </lineage>
</organism>
<gene>
    <name evidence="1" type="primary">tsf</name>
    <name type="ordered locus">NAMH_0452</name>
</gene>
<sequence>MANITAAMVKALREKTGAGMMDCKKALVEAEGNEEKAVEILRKKGLAKAAKKADRNAAEGRVEIYISDDYKKGSIAEVNCETDFVAKTDEFIEFVSETVKTINVNDIADTEALNKAPFGAGTFEEELKVKIAKIGENIVVRRIGTIKAPENGIVNGYIHAGGKVGVLVAAACDSEKTCEAIKDTLRDIAMHIAAMKPQYLNPEAVPADVIEKEKEIAKAQLLKEGKPEQVIDKIIPGKIKRFYSDVCVTEQEYVKAEKKETVAEALSKAAKAAGGEAKLVDFIRFEVGEGLVKNACNMADEVAAALS</sequence>
<feature type="chain" id="PRO_1000117593" description="Elongation factor Ts">
    <location>
        <begin position="1"/>
        <end position="307"/>
    </location>
</feature>
<feature type="region of interest" description="Involved in Mg(2+) ion dislocation from EF-Tu" evidence="1">
    <location>
        <begin position="82"/>
        <end position="85"/>
    </location>
</feature>
<accession>B9L8B2</accession>
<dbReference type="EMBL" id="CP001279">
    <property type="protein sequence ID" value="ACM93497.1"/>
    <property type="molecule type" value="Genomic_DNA"/>
</dbReference>
<dbReference type="RefSeq" id="WP_015902549.1">
    <property type="nucleotide sequence ID" value="NC_012115.1"/>
</dbReference>
<dbReference type="SMR" id="B9L8B2"/>
<dbReference type="STRING" id="598659.NAMH_0452"/>
<dbReference type="KEGG" id="nam:NAMH_0452"/>
<dbReference type="eggNOG" id="COG0264">
    <property type="taxonomic scope" value="Bacteria"/>
</dbReference>
<dbReference type="HOGENOM" id="CLU_047155_0_0_7"/>
<dbReference type="OrthoDB" id="9808348at2"/>
<dbReference type="Proteomes" id="UP000000448">
    <property type="component" value="Chromosome"/>
</dbReference>
<dbReference type="GO" id="GO:0005737">
    <property type="term" value="C:cytoplasm"/>
    <property type="evidence" value="ECO:0007669"/>
    <property type="project" value="UniProtKB-SubCell"/>
</dbReference>
<dbReference type="GO" id="GO:0003746">
    <property type="term" value="F:translation elongation factor activity"/>
    <property type="evidence" value="ECO:0007669"/>
    <property type="project" value="UniProtKB-UniRule"/>
</dbReference>
<dbReference type="CDD" id="cd14275">
    <property type="entry name" value="UBA_EF-Ts"/>
    <property type="match status" value="1"/>
</dbReference>
<dbReference type="FunFam" id="1.10.286.20:FF:000001">
    <property type="entry name" value="Elongation factor Ts"/>
    <property type="match status" value="1"/>
</dbReference>
<dbReference type="FunFam" id="1.10.8.10:FF:000001">
    <property type="entry name" value="Elongation factor Ts"/>
    <property type="match status" value="1"/>
</dbReference>
<dbReference type="Gene3D" id="1.10.286.20">
    <property type="match status" value="1"/>
</dbReference>
<dbReference type="Gene3D" id="1.10.8.10">
    <property type="entry name" value="DNA helicase RuvA subunit, C-terminal domain"/>
    <property type="match status" value="1"/>
</dbReference>
<dbReference type="Gene3D" id="3.30.479.20">
    <property type="entry name" value="Elongation factor Ts, dimerisation domain"/>
    <property type="match status" value="2"/>
</dbReference>
<dbReference type="HAMAP" id="MF_00050">
    <property type="entry name" value="EF_Ts"/>
    <property type="match status" value="1"/>
</dbReference>
<dbReference type="InterPro" id="IPR036402">
    <property type="entry name" value="EF-Ts_dimer_sf"/>
</dbReference>
<dbReference type="InterPro" id="IPR001816">
    <property type="entry name" value="Transl_elong_EFTs/EF1B"/>
</dbReference>
<dbReference type="InterPro" id="IPR014039">
    <property type="entry name" value="Transl_elong_EFTs/EF1B_dimer"/>
</dbReference>
<dbReference type="InterPro" id="IPR018101">
    <property type="entry name" value="Transl_elong_Ts_CS"/>
</dbReference>
<dbReference type="InterPro" id="IPR009060">
    <property type="entry name" value="UBA-like_sf"/>
</dbReference>
<dbReference type="NCBIfam" id="TIGR00116">
    <property type="entry name" value="tsf"/>
    <property type="match status" value="1"/>
</dbReference>
<dbReference type="PANTHER" id="PTHR11741">
    <property type="entry name" value="ELONGATION FACTOR TS"/>
    <property type="match status" value="1"/>
</dbReference>
<dbReference type="PANTHER" id="PTHR11741:SF0">
    <property type="entry name" value="ELONGATION FACTOR TS, MITOCHONDRIAL"/>
    <property type="match status" value="1"/>
</dbReference>
<dbReference type="Pfam" id="PF00889">
    <property type="entry name" value="EF_TS"/>
    <property type="match status" value="1"/>
</dbReference>
<dbReference type="SUPFAM" id="SSF54713">
    <property type="entry name" value="Elongation factor Ts (EF-Ts), dimerisation domain"/>
    <property type="match status" value="2"/>
</dbReference>
<dbReference type="SUPFAM" id="SSF46934">
    <property type="entry name" value="UBA-like"/>
    <property type="match status" value="1"/>
</dbReference>
<dbReference type="PROSITE" id="PS01126">
    <property type="entry name" value="EF_TS_1"/>
    <property type="match status" value="1"/>
</dbReference>
<dbReference type="PROSITE" id="PS01127">
    <property type="entry name" value="EF_TS_2"/>
    <property type="match status" value="1"/>
</dbReference>
<evidence type="ECO:0000255" key="1">
    <source>
        <dbReference type="HAMAP-Rule" id="MF_00050"/>
    </source>
</evidence>
<protein>
    <recommendedName>
        <fullName evidence="1">Elongation factor Ts</fullName>
        <shortName evidence="1">EF-Ts</shortName>
    </recommendedName>
</protein>
<proteinExistence type="inferred from homology"/>
<comment type="function">
    <text evidence="1">Associates with the EF-Tu.GDP complex and induces the exchange of GDP to GTP. It remains bound to the aminoacyl-tRNA.EF-Tu.GTP complex up to the GTP hydrolysis stage on the ribosome.</text>
</comment>
<comment type="subcellular location">
    <subcellularLocation>
        <location evidence="1">Cytoplasm</location>
    </subcellularLocation>
</comment>
<comment type="similarity">
    <text evidence="1">Belongs to the EF-Ts family.</text>
</comment>